<accession>Q85444</accession>
<organismHost>
    <name type="scientific">Diadromus pulchellus</name>
    <name type="common">Parasitic wasp</name>
    <dbReference type="NCBI Taxonomy" id="7420"/>
</organismHost>
<evidence type="ECO:0000255" key="1"/>
<evidence type="ECO:0000256" key="2">
    <source>
        <dbReference type="SAM" id="MobiDB-lite"/>
    </source>
</evidence>
<evidence type="ECO:0000305" key="3"/>
<gene>
    <name type="primary">S2</name>
</gene>
<keyword id="KW-0175">Coiled coil</keyword>
<keyword id="KW-1043">Host membrane</keyword>
<keyword id="KW-0472">Membrane</keyword>
<keyword id="KW-0812">Transmembrane</keyword>
<keyword id="KW-1133">Transmembrane helix</keyword>
<sequence>MDNALCYLQHLKDERQFIFGILNDNVREINIAKKEIKQLREYVGILQQNGFTGEALVSQMEYSMKIKKIKKLSSQYDINSAENSSGPYDFSFIGNELTIFRERLSNYSSWGVMHSIPSMPESIYIYMNPIHQTDEVDIVYQGSNDNYSYLIKKNGRTASYEHQITLNLAKDAVKKHNLREATKQRIVNNRKVNFITKYTEVTTNGKTDQLAVPLFLLHLVKTATGYKVSYITIKIILEEQVESNVNIVEIDTGVEMTNAEVNAIITGLLSRMMMVTNFVLGNSMVHRRMLRQFIGMQVKVIEGAYVINSQKGAGSNLLSGMYGQGVIATLSSLATLLESTPQTVKPNYVLNGIHTNDIEQKEYEVSSILKYTTNKSKDRKVGLAERISNINKPYSVTMTLGKGNGGILAIREYSALKFNYDYPDQLDDIIPSNADSSRPDAVRMTMTKTQSNNDIKITTTVHIILDITDYKDKKVSEGVIHTTLRKSGIYVKLEAIHNQTRSEAPGSLGGTDSLVSTTLCGIAQVHSKTSALSELSNNGGVDFFDGDDVKRDNNMCTNRKNFCVKFTTTSRSSPSVTLDIKSLGKRYKGNFPMIIQRVVDLTGREAWAYEAQLSSITMDNVQLRFGSKQEISIKETSQQFVYDDNGIIKVKYEKTLSGSVLKDGSKITTVIPDQKFNSINDIDNILTSRNQRNLRHRDVPWTGANNATAKYNGFRDDGMWGRKESGLMQYNNEDDVIIPIAFLGYTTSGSGGSRYILREYDIERAQQLMHTITRRDRSNTRQGQKNIYVRDGTSSGGYVANWHAMKTSMYMSLPGKNIMIKNVEINDIQELVLPNGVYDQILLSATNITLWNSVLILNQYVVYIKELAEDNARRLDVVEKTLNKVIELHQTMTVTPEETAQEESGWDIAGRIFTMLGAVVGMFFPIIGASIEVLGLVATGVGSIQQGHIVNGSLELTLAGVATVIGGYKLQKRLRQKYTLEGIKDSIKIKMDKLKEKFGTRVKNTHIGKEDSNNGVSTSTNKRSIGKANNTLTGTTDIEIVNDVINGQSAHITKTTYSQISPELQDCYRELDALLELTGNVEHWPSGLNLATAFDIRLTEKIDKIGKGKMSINAIVHGEQRTAEVNDAVWSKCVGVKANVEDYTIIRSAYVDTVQKEEMINVDRDIIRDIYTANGTKIVEKTSVGINSNNVNGKEYTVTQDGDISQLEHVITSGTVNDQSMQLIIQRCVLYYSELSSSPSD</sequence>
<proteinExistence type="predicted"/>
<comment type="subcellular location">
    <subcellularLocation>
        <location evidence="3">Host membrane</location>
        <topology evidence="3">Multi-pass membrane protein</topology>
    </subcellularLocation>
</comment>
<dbReference type="EMBL" id="X80481">
    <property type="protein sequence ID" value="CAA56651.1"/>
    <property type="molecule type" value="Genomic_RNA"/>
</dbReference>
<dbReference type="SMR" id="Q85444"/>
<dbReference type="GO" id="GO:0033644">
    <property type="term" value="C:host cell membrane"/>
    <property type="evidence" value="ECO:0007669"/>
    <property type="project" value="UniProtKB-SubCell"/>
</dbReference>
<dbReference type="GO" id="GO:0016020">
    <property type="term" value="C:membrane"/>
    <property type="evidence" value="ECO:0007669"/>
    <property type="project" value="UniProtKB-KW"/>
</dbReference>
<feature type="chain" id="PRO_0000404248" description="Uncharacterized protein S3">
    <location>
        <begin position="1"/>
        <end position="1241"/>
    </location>
</feature>
<feature type="transmembrane region" description="Helical" evidence="1">
    <location>
        <begin position="261"/>
        <end position="281"/>
    </location>
</feature>
<feature type="transmembrane region" description="Helical" evidence="1">
    <location>
        <begin position="918"/>
        <end position="938"/>
    </location>
</feature>
<feature type="transmembrane region" description="Helical" evidence="1">
    <location>
        <begin position="947"/>
        <end position="967"/>
    </location>
</feature>
<feature type="region of interest" description="Disordered" evidence="2">
    <location>
        <begin position="1005"/>
        <end position="1028"/>
    </location>
</feature>
<feature type="coiled-coil region" evidence="1">
    <location>
        <begin position="21"/>
        <end position="49"/>
    </location>
</feature>
<feature type="compositionally biased region" description="Polar residues" evidence="2">
    <location>
        <begin position="1013"/>
        <end position="1028"/>
    </location>
</feature>
<protein>
    <recommendedName>
        <fullName>Uncharacterized protein S3</fullName>
    </recommendedName>
</protein>
<reference key="1">
    <citation type="journal article" date="1994" name="Virology">
        <title>A member of the reoviridae (DpRV) has a ploidy-specific genomic segment in the wasp Diadromus pulchellus (Hymenoptera).</title>
        <authorList>
            <person name="Rabouille A."/>
            <person name="Bigot Y."/>
            <person name="Drezen J.M."/>
            <person name="Sizaret P.Y."/>
            <person name="Hamelin M.H."/>
            <person name="Periquet G."/>
        </authorList>
    </citation>
    <scope>NUCLEOTIDE SEQUENCE [GENOMIC RNA]</scope>
</reference>
<organism>
    <name type="scientific">Diadromus pulchellus idnoreovirus 1</name>
    <name type="common">DpIRV-1</name>
    <dbReference type="NCBI Taxonomy" id="37368"/>
    <lineage>
        <taxon>Viruses</taxon>
        <taxon>Riboviria</taxon>
        <taxon>Orthornavirae</taxon>
        <taxon>Duplornaviricota</taxon>
        <taxon>Resentoviricetes</taxon>
        <taxon>Reovirales</taxon>
        <taxon>Spinareoviridae</taxon>
        <taxon>Idnoreovirus</taxon>
        <taxon>Idnoreovirus 1</taxon>
    </lineage>
</organism>
<name>S3_DPIRV</name>